<gene>
    <name type="primary">CDK13</name>
    <name type="synonym">CDC2L</name>
    <name type="synonym">CDC2L5</name>
    <name type="synonym">CHED</name>
    <name type="synonym">KIAA1791</name>
</gene>
<keyword id="KW-0002">3D-structure</keyword>
<keyword id="KW-0007">Acetylation</keyword>
<keyword id="KW-0025">Alternative splicing</keyword>
<keyword id="KW-0067">ATP-binding</keyword>
<keyword id="KW-0225">Disease variant</keyword>
<keyword id="KW-0945">Host-virus interaction</keyword>
<keyword id="KW-0991">Intellectual disability</keyword>
<keyword id="KW-1017">Isopeptide bond</keyword>
<keyword id="KW-0418">Kinase</keyword>
<keyword id="KW-0507">mRNA processing</keyword>
<keyword id="KW-0508">mRNA splicing</keyword>
<keyword id="KW-0547">Nucleotide-binding</keyword>
<keyword id="KW-0539">Nucleus</keyword>
<keyword id="KW-0597">Phosphoprotein</keyword>
<keyword id="KW-1267">Proteomics identification</keyword>
<keyword id="KW-1185">Reference proteome</keyword>
<keyword id="KW-0691">RNA editing</keyword>
<keyword id="KW-0723">Serine/threonine-protein kinase</keyword>
<keyword id="KW-0808">Transferase</keyword>
<keyword id="KW-0832">Ubl conjugation</keyword>
<reference key="1">
    <citation type="journal article" date="2000" name="Biochem. Biophys. Res. Commun.">
        <title>A new subfamily of high molecular mass CDC2-related kinases with PITAI/VRE.</title>
        <authorList>
            <person name="Marques F."/>
            <person name="Moreau J.L."/>
            <person name="Peaucellier G."/>
            <person name="Lozano J.C."/>
            <person name="Schatt P."/>
            <person name="Picard A."/>
            <person name="Callebaut I."/>
            <person name="Perre E."/>
            <person name="Geneviere A.M."/>
        </authorList>
    </citation>
    <scope>NUCLEOTIDE SEQUENCE [MRNA] (ISOFORMS 1 AND 2)</scope>
    <scope>VARIANTS LEU-700 AND MET-1170</scope>
    <source>
        <tissue>Placenta</tissue>
    </source>
</reference>
<reference key="2">
    <citation type="submission" date="2004-07" db="EMBL/GenBank/DDBJ databases">
        <authorList>
            <consortium name="NIEHS SNPs program"/>
        </authorList>
    </citation>
    <scope>NUCLEOTIDE SEQUENCE [GENOMIC DNA]</scope>
    <scope>VARIANTS ALA-356; PHE-403; GLN-410; ALA-500; GLY-624 AND MET-1062</scope>
</reference>
<reference key="3">
    <citation type="journal article" date="2003" name="Nature">
        <title>The DNA sequence of human chromosome 7.</title>
        <authorList>
            <person name="Hillier L.W."/>
            <person name="Fulton R.S."/>
            <person name="Fulton L.A."/>
            <person name="Graves T.A."/>
            <person name="Pepin K.H."/>
            <person name="Wagner-McPherson C."/>
            <person name="Layman D."/>
            <person name="Maas J."/>
            <person name="Jaeger S."/>
            <person name="Walker R."/>
            <person name="Wylie K."/>
            <person name="Sekhon M."/>
            <person name="Becker M.C."/>
            <person name="O'Laughlin M.D."/>
            <person name="Schaller M.E."/>
            <person name="Fewell G.A."/>
            <person name="Delehaunty K.D."/>
            <person name="Miner T.L."/>
            <person name="Nash W.E."/>
            <person name="Cordes M."/>
            <person name="Du H."/>
            <person name="Sun H."/>
            <person name="Edwards J."/>
            <person name="Bradshaw-Cordum H."/>
            <person name="Ali J."/>
            <person name="Andrews S."/>
            <person name="Isak A."/>
            <person name="Vanbrunt A."/>
            <person name="Nguyen C."/>
            <person name="Du F."/>
            <person name="Lamar B."/>
            <person name="Courtney L."/>
            <person name="Kalicki J."/>
            <person name="Ozersky P."/>
            <person name="Bielicki L."/>
            <person name="Scott K."/>
            <person name="Holmes A."/>
            <person name="Harkins R."/>
            <person name="Harris A."/>
            <person name="Strong C.M."/>
            <person name="Hou S."/>
            <person name="Tomlinson C."/>
            <person name="Dauphin-Kohlberg S."/>
            <person name="Kozlowicz-Reilly A."/>
            <person name="Leonard S."/>
            <person name="Rohlfing T."/>
            <person name="Rock S.M."/>
            <person name="Tin-Wollam A.-M."/>
            <person name="Abbott A."/>
            <person name="Minx P."/>
            <person name="Maupin R."/>
            <person name="Strowmatt C."/>
            <person name="Latreille P."/>
            <person name="Miller N."/>
            <person name="Johnson D."/>
            <person name="Murray J."/>
            <person name="Woessner J.P."/>
            <person name="Wendl M.C."/>
            <person name="Yang S.-P."/>
            <person name="Schultz B.R."/>
            <person name="Wallis J.W."/>
            <person name="Spieth J."/>
            <person name="Bieri T.A."/>
            <person name="Nelson J.O."/>
            <person name="Berkowicz N."/>
            <person name="Wohldmann P.E."/>
            <person name="Cook L.L."/>
            <person name="Hickenbotham M.T."/>
            <person name="Eldred J."/>
            <person name="Williams D."/>
            <person name="Bedell J.A."/>
            <person name="Mardis E.R."/>
            <person name="Clifton S.W."/>
            <person name="Chissoe S.L."/>
            <person name="Marra M.A."/>
            <person name="Raymond C."/>
            <person name="Haugen E."/>
            <person name="Gillett W."/>
            <person name="Zhou Y."/>
            <person name="James R."/>
            <person name="Phelps K."/>
            <person name="Iadanoto S."/>
            <person name="Bubb K."/>
            <person name="Simms E."/>
            <person name="Levy R."/>
            <person name="Clendenning J."/>
            <person name="Kaul R."/>
            <person name="Kent W.J."/>
            <person name="Furey T.S."/>
            <person name="Baertsch R.A."/>
            <person name="Brent M.R."/>
            <person name="Keibler E."/>
            <person name="Flicek P."/>
            <person name="Bork P."/>
            <person name="Suyama M."/>
            <person name="Bailey J.A."/>
            <person name="Portnoy M.E."/>
            <person name="Torrents D."/>
            <person name="Chinwalla A.T."/>
            <person name="Gish W.R."/>
            <person name="Eddy S.R."/>
            <person name="McPherson J.D."/>
            <person name="Olson M.V."/>
            <person name="Eichler E.E."/>
            <person name="Green E.D."/>
            <person name="Waterston R.H."/>
            <person name="Wilson R.K."/>
        </authorList>
    </citation>
    <scope>NUCLEOTIDE SEQUENCE [LARGE SCALE GENOMIC DNA]</scope>
</reference>
<reference key="4">
    <citation type="journal article" date="1992" name="Proc. Natl. Acad. Sci. U.S.A.">
        <title>Cloning and antisense oligodeoxynucleotide inhibition of a human homolog of cdc2 required in hematopoiesis.</title>
        <authorList>
            <person name="Lapidot-Lifson Y."/>
            <person name="Patinkin D."/>
            <person name="Prody C.A."/>
            <person name="Ehrlich G."/>
            <person name="Seidman S."/>
            <person name="Ben-Aziz R."/>
            <person name="Benseler F."/>
            <person name="Eckstein F."/>
            <person name="Zakut H."/>
            <person name="Soreq H."/>
        </authorList>
    </citation>
    <scope>NUCLEOTIDE SEQUENCE [MRNA] OF 361-1078</scope>
    <scope>FUNCTION</scope>
    <scope>VARIANT LEU-700</scope>
    <source>
        <tissue>Glioblastoma</tissue>
    </source>
</reference>
<reference key="5">
    <citation type="submission" date="2005-04" db="EMBL/GenBank/DDBJ databases">
        <authorList>
            <person name="Suzuki Y."/>
            <person name="Sugano S."/>
            <person name="Totoki Y."/>
            <person name="Toyoda A."/>
            <person name="Takeda T."/>
            <person name="Sakaki Y."/>
            <person name="Tanaka A."/>
            <person name="Yokoyama S."/>
        </authorList>
    </citation>
    <scope>NUCLEOTIDE SEQUENCE [LARGE SCALE MRNA] OF 856-1512 (ISOFORM 2)</scope>
    <source>
        <tissue>Thyroid</tissue>
    </source>
</reference>
<reference key="6">
    <citation type="journal article" date="2001" name="DNA Res.">
        <title>Prediction of the coding sequences of unidentified human genes. XX. The complete sequences of 100 new cDNA clones from brain which code for large proteins in vitro.</title>
        <authorList>
            <person name="Nagase T."/>
            <person name="Nakayama M."/>
            <person name="Nakajima D."/>
            <person name="Kikuno R."/>
            <person name="Ohara O."/>
        </authorList>
    </citation>
    <scope>NUCLEOTIDE SEQUENCE [LARGE SCALE MRNA] OF 860-1512 (ISOFORM 1)</scope>
    <source>
        <tissue>Brain</tissue>
    </source>
</reference>
<reference key="7">
    <citation type="journal article" date="2004" name="Anal. Chem.">
        <title>Robust phosphoproteomic profiling of tyrosine phosphorylation sites from human T cells using immobilized metal affinity chromatography and tandem mass spectrometry.</title>
        <authorList>
            <person name="Brill L.M."/>
            <person name="Salomon A.R."/>
            <person name="Ficarro S.B."/>
            <person name="Mukherji M."/>
            <person name="Stettler-Gill M."/>
            <person name="Peters E.C."/>
        </authorList>
    </citation>
    <scope>IDENTIFICATION BY MASS SPECTROMETRY [LARGE SCALE ANALYSIS]</scope>
    <source>
        <tissue>Leukemic T-cell</tissue>
    </source>
</reference>
<reference key="8">
    <citation type="journal article" date="2006" name="Cell">
        <title>Global, in vivo, and site-specific phosphorylation dynamics in signaling networks.</title>
        <authorList>
            <person name="Olsen J.V."/>
            <person name="Blagoev B."/>
            <person name="Gnad F."/>
            <person name="Macek B."/>
            <person name="Kumar C."/>
            <person name="Mortensen P."/>
            <person name="Mann M."/>
        </authorList>
    </citation>
    <scope>PHOSPHORYLATION [LARGE SCALE ANALYSIS] AT THR-1246</scope>
    <scope>IDENTIFICATION BY MASS SPECTROMETRY [LARGE SCALE ANALYSIS]</scope>
    <source>
        <tissue>Cervix carcinoma</tissue>
    </source>
</reference>
<reference key="9">
    <citation type="journal article" date="2006" name="J. Cell. Biochem.">
        <title>CDC2L5, a Cdk-like kinase with RS domain, interacts with the ASF/SF2-associated protein p32 and affects splicing in vivo.</title>
        <authorList>
            <person name="Even Y."/>
            <person name="Durieux S."/>
            <person name="Escande M.L."/>
            <person name="Lozano J.C."/>
            <person name="Peaucellier G."/>
            <person name="Weil D."/>
            <person name="Geneviere A.M."/>
        </authorList>
    </citation>
    <scope>FUNCTION</scope>
    <scope>SUBCELLULAR LOCATION</scope>
    <scope>INTERACTION WITH C1QBP</scope>
</reference>
<reference key="10">
    <citation type="journal article" date="2007" name="Science">
        <title>ATM and ATR substrate analysis reveals extensive protein networks responsive to DNA damage.</title>
        <authorList>
            <person name="Matsuoka S."/>
            <person name="Ballif B.A."/>
            <person name="Smogorzewska A."/>
            <person name="McDonald E.R. III"/>
            <person name="Hurov K.E."/>
            <person name="Luo J."/>
            <person name="Bakalarski C.E."/>
            <person name="Zhao Z."/>
            <person name="Solimini N."/>
            <person name="Lerenthal Y."/>
            <person name="Shiloh Y."/>
            <person name="Gygi S.P."/>
            <person name="Elledge S.J."/>
        </authorList>
    </citation>
    <scope>IDENTIFICATION BY MASS SPECTROMETRY [LARGE SCALE ANALYSIS]</scope>
    <source>
        <tissue>Embryonic kidney</tissue>
    </source>
</reference>
<reference key="11">
    <citation type="journal article" date="2008" name="J. Proteome Res.">
        <title>Combining protein-based IMAC, peptide-based IMAC, and MudPIT for efficient phosphoproteomic analysis.</title>
        <authorList>
            <person name="Cantin G.T."/>
            <person name="Yi W."/>
            <person name="Lu B."/>
            <person name="Park S.K."/>
            <person name="Xu T."/>
            <person name="Lee J.-D."/>
            <person name="Yates J.R. III"/>
        </authorList>
    </citation>
    <scope>IDENTIFICATION BY MASS SPECTROMETRY [LARGE SCALE ANALYSIS]</scope>
    <source>
        <tissue>Cervix carcinoma</tissue>
    </source>
</reference>
<reference key="12">
    <citation type="journal article" date="2008" name="J. Virol.">
        <title>CDK13, a new potential human immunodeficiency virus type 1 inhibitory factor regulating viral mRNA splicing.</title>
        <authorList>
            <person name="Berro R."/>
            <person name="Pedati C."/>
            <person name="Kehn-Hall K."/>
            <person name="Wu W."/>
            <person name="Klase Z."/>
            <person name="Even Y."/>
            <person name="Geneviere A.M."/>
            <person name="Ammosova T."/>
            <person name="Nekhai S."/>
            <person name="Kashanchi F."/>
        </authorList>
    </citation>
    <scope>FUNCTION</scope>
    <scope>INTERACTION WITH HIV-1 TAT (MICROBIAL INFECTION)</scope>
</reference>
<reference key="13">
    <citation type="journal article" date="2008" name="Mol. Cell">
        <title>Kinase-selective enrichment enables quantitative phosphoproteomics of the kinome across the cell cycle.</title>
        <authorList>
            <person name="Daub H."/>
            <person name="Olsen J.V."/>
            <person name="Bairlein M."/>
            <person name="Gnad F."/>
            <person name="Oppermann F.S."/>
            <person name="Korner R."/>
            <person name="Greff Z."/>
            <person name="Keri G."/>
            <person name="Stemmann O."/>
            <person name="Mann M."/>
        </authorList>
    </citation>
    <scope>PHOSPHORYLATION [LARGE SCALE ANALYSIS] AT THR-1246</scope>
    <scope>IDENTIFICATION BY MASS SPECTROMETRY [LARGE SCALE ANALYSIS]</scope>
    <source>
        <tissue>Cervix carcinoma</tissue>
    </source>
</reference>
<reference key="14">
    <citation type="journal article" date="2008" name="Proc. Natl. Acad. Sci. U.S.A.">
        <title>A quantitative atlas of mitotic phosphorylation.</title>
        <authorList>
            <person name="Dephoure N."/>
            <person name="Zhou C."/>
            <person name="Villen J."/>
            <person name="Beausoleil S.A."/>
            <person name="Bakalarski C.E."/>
            <person name="Elledge S.J."/>
            <person name="Gygi S.P."/>
        </authorList>
    </citation>
    <scope>PHOSPHORYLATION [LARGE SCALE ANALYSIS] AT SER-315; SER-317; SER-325; SER-340; SER-342; SER-383; SER-395; SER-397; SER-400; SER-437; SER-439 AND THR-871</scope>
    <scope>IDENTIFICATION BY MASS SPECTROMETRY [LARGE SCALE ANALYSIS]</scope>
    <source>
        <tissue>Cervix carcinoma</tissue>
    </source>
</reference>
<reference key="15">
    <citation type="journal article" date="2009" name="Anal. Chem.">
        <title>Lys-N and trypsin cover complementary parts of the phosphoproteome in a refined SCX-based approach.</title>
        <authorList>
            <person name="Gauci S."/>
            <person name="Helbig A.O."/>
            <person name="Slijper M."/>
            <person name="Krijgsveld J."/>
            <person name="Heck A.J."/>
            <person name="Mohammed S."/>
        </authorList>
    </citation>
    <scope>IDENTIFICATION BY MASS SPECTROMETRY [LARGE SCALE ANALYSIS]</scope>
</reference>
<reference key="16">
    <citation type="journal article" date="2009" name="Mol. Cell. Proteomics">
        <title>Large-scale proteomics analysis of the human kinome.</title>
        <authorList>
            <person name="Oppermann F.S."/>
            <person name="Gnad F."/>
            <person name="Olsen J.V."/>
            <person name="Hornberger R."/>
            <person name="Greff Z."/>
            <person name="Keri G."/>
            <person name="Mann M."/>
            <person name="Daub H."/>
        </authorList>
    </citation>
    <scope>PHOSPHORYLATION [LARGE SCALE ANALYSIS] AT SER-1048</scope>
    <scope>IDENTIFICATION BY MASS SPECTROMETRY [LARGE SCALE ANALYSIS]</scope>
</reference>
<reference key="17">
    <citation type="journal article" date="2009" name="Sci. Signal.">
        <title>Quantitative phosphoproteomic analysis of T cell receptor signaling reveals system-wide modulation of protein-protein interactions.</title>
        <authorList>
            <person name="Mayya V."/>
            <person name="Lundgren D.H."/>
            <person name="Hwang S.-I."/>
            <person name="Rezaul K."/>
            <person name="Wu L."/>
            <person name="Eng J.K."/>
            <person name="Rodionov V."/>
            <person name="Han D.K."/>
        </authorList>
    </citation>
    <scope>IDENTIFICATION BY MASS SPECTROMETRY [LARGE SCALE ANALYSIS]</scope>
    <source>
        <tissue>Leukemic T-cell</tissue>
    </source>
</reference>
<reference key="18">
    <citation type="journal article" date="2009" name="Science">
        <title>Lysine acetylation targets protein complexes and co-regulates major cellular functions.</title>
        <authorList>
            <person name="Choudhary C."/>
            <person name="Kumar C."/>
            <person name="Gnad F."/>
            <person name="Nielsen M.L."/>
            <person name="Rehman M."/>
            <person name="Walther T.C."/>
            <person name="Olsen J.V."/>
            <person name="Mann M."/>
        </authorList>
    </citation>
    <scope>ACETYLATION [LARGE SCALE ANALYSIS] AT LYS-556</scope>
    <scope>IDENTIFICATION BY MASS SPECTROMETRY [LARGE SCALE ANALYSIS]</scope>
</reference>
<reference key="19">
    <citation type="journal article" date="2010" name="Genes Dev.">
        <title>CDK12 is a transcription elongation-associated CTD kinase, the metazoan ortholog of yeast Ctk1.</title>
        <authorList>
            <person name="Bartkowiak B."/>
            <person name="Liu P."/>
            <person name="Phatnani H.P."/>
            <person name="Fuda N.J."/>
            <person name="Cooper J.J."/>
            <person name="Price D.H."/>
            <person name="Adelman K."/>
            <person name="Lis J.T."/>
            <person name="Greenleaf A.L."/>
        </authorList>
    </citation>
    <scope>FUNCTION</scope>
    <scope>CATALYTIC ACTIVITY</scope>
</reference>
<reference key="20">
    <citation type="journal article" date="2010" name="Sci. Signal.">
        <title>Quantitative phosphoproteomics reveals widespread full phosphorylation site occupancy during mitosis.</title>
        <authorList>
            <person name="Olsen J.V."/>
            <person name="Vermeulen M."/>
            <person name="Santamaria A."/>
            <person name="Kumar C."/>
            <person name="Miller M.L."/>
            <person name="Jensen L.J."/>
            <person name="Gnad F."/>
            <person name="Cox J."/>
            <person name="Jensen T.S."/>
            <person name="Nigg E.A."/>
            <person name="Brunak S."/>
            <person name="Mann M."/>
        </authorList>
    </citation>
    <scope>PHOSPHORYLATION [LARGE SCALE ANALYSIS] AT SER-383; SER-437; SER-439; SER-525 AND THR-871</scope>
    <scope>IDENTIFICATION BY MASS SPECTROMETRY [LARGE SCALE ANALYSIS]</scope>
    <source>
        <tissue>Cervix carcinoma</tissue>
    </source>
</reference>
<reference key="21">
    <citation type="journal article" date="2011" name="BMC Syst. Biol.">
        <title>Initial characterization of the human central proteome.</title>
        <authorList>
            <person name="Burkard T.R."/>
            <person name="Planyavsky M."/>
            <person name="Kaupe I."/>
            <person name="Breitwieser F.P."/>
            <person name="Buerckstuemmer T."/>
            <person name="Bennett K.L."/>
            <person name="Superti-Furga G."/>
            <person name="Colinge J."/>
        </authorList>
    </citation>
    <scope>IDENTIFICATION BY MASS SPECTROMETRY [LARGE SCALE ANALYSIS]</scope>
</reference>
<reference key="22">
    <citation type="journal article" date="2011" name="Biochem. Biophys. Res. Commun.">
        <title>Genome-wide evaluation and discovery of vertebrate A-to-I RNA editing sites.</title>
        <authorList>
            <person name="Maas S."/>
            <person name="Godfried Sie C.P."/>
            <person name="Stoev I."/>
            <person name="Dupuis D.E."/>
            <person name="Latona J."/>
            <person name="Porman A.M."/>
            <person name="Evans B."/>
            <person name="Rekawek P."/>
            <person name="Kluempers V."/>
            <person name="Mutter M."/>
            <person name="Gommans W.M."/>
            <person name="Lopresti D."/>
        </authorList>
    </citation>
    <scope>RNA EDITING OF POSITION 103</scope>
</reference>
<reference key="23">
    <citation type="journal article" date="2011" name="Genes Dev.">
        <title>The Cyclin K/Cdk12 complex maintains genomic stability via regulation of expression of DNA damage response genes.</title>
        <authorList>
            <person name="Blazek D."/>
            <person name="Kohoutek J."/>
            <person name="Bartholomeeusen K."/>
            <person name="Johansen E."/>
            <person name="Hulinkova P."/>
            <person name="Luo Z."/>
            <person name="Cimermancic P."/>
            <person name="Ule J."/>
            <person name="Peterlin B.M."/>
        </authorList>
    </citation>
    <scope>INTERACTION WITH CCNK</scope>
</reference>
<reference key="24">
    <citation type="journal article" date="2011" name="Sci. Signal.">
        <title>System-wide temporal characterization of the proteome and phosphoproteome of human embryonic stem cell differentiation.</title>
        <authorList>
            <person name="Rigbolt K.T."/>
            <person name="Prokhorova T.A."/>
            <person name="Akimov V."/>
            <person name="Henningsen J."/>
            <person name="Johansen P.T."/>
            <person name="Kratchmarova I."/>
            <person name="Kassem M."/>
            <person name="Mann M."/>
            <person name="Olsen J.V."/>
            <person name="Blagoev B."/>
        </authorList>
    </citation>
    <scope>PHOSPHORYLATION [LARGE SCALE ANALYSIS] AT SER-315; SER-317; SER-383; SER-395; SER-397; SER-400; SER-437; SER-439; THR-871 AND THR-1246</scope>
    <scope>IDENTIFICATION BY MASS SPECTROMETRY [LARGE SCALE ANALYSIS]</scope>
</reference>
<reference key="25">
    <citation type="journal article" date="2013" name="J. Proteome Res.">
        <title>Toward a comprehensive characterization of a human cancer cell phosphoproteome.</title>
        <authorList>
            <person name="Zhou H."/>
            <person name="Di Palma S."/>
            <person name="Preisinger C."/>
            <person name="Peng M."/>
            <person name="Polat A.N."/>
            <person name="Heck A.J."/>
            <person name="Mohammed S."/>
        </authorList>
    </citation>
    <scope>PHOSPHORYLATION [LARGE SCALE ANALYSIS] AT SER-315; SER-317; SER-325; SER-358; SER-360; SER-383; SER-437; SER-439; SER-525; THR-588; THR-871; SER-1048 AND THR-1246</scope>
    <scope>IDENTIFICATION BY MASS SPECTROMETRY [LARGE SCALE ANALYSIS]</scope>
    <source>
        <tissue>Cervix carcinoma</tissue>
        <tissue>Erythroleukemia</tissue>
    </source>
</reference>
<reference key="26">
    <citation type="journal article" date="2014" name="J. Proteomics">
        <title>An enzyme assisted RP-RPLC approach for in-depth analysis of human liver phosphoproteome.</title>
        <authorList>
            <person name="Bian Y."/>
            <person name="Song C."/>
            <person name="Cheng K."/>
            <person name="Dong M."/>
            <person name="Wang F."/>
            <person name="Huang J."/>
            <person name="Sun D."/>
            <person name="Wang L."/>
            <person name="Ye M."/>
            <person name="Zou H."/>
        </authorList>
    </citation>
    <scope>IDENTIFICATION BY MASS SPECTROMETRY [LARGE SCALE ANALYSIS]</scope>
    <source>
        <tissue>Liver</tissue>
    </source>
</reference>
<reference key="27">
    <citation type="journal article" date="2017" name="Nat. Struct. Mol. Biol.">
        <title>Site-specific mapping of the human SUMO proteome reveals co-modification with phosphorylation.</title>
        <authorList>
            <person name="Hendriks I.A."/>
            <person name="Lyon D."/>
            <person name="Young C."/>
            <person name="Jensen L.J."/>
            <person name="Vertegaal A.C."/>
            <person name="Nielsen M.L."/>
        </authorList>
    </citation>
    <scope>SUMOYLATION [LARGE SCALE ANALYSIS] AT LYS-519 AND LYS-547</scope>
    <scope>IDENTIFICATION BY MASS SPECTROMETRY [LARGE SCALE ANALYSIS]</scope>
</reference>
<reference key="28">
    <citation type="journal article" date="2021" name="Vaccines (Basel)">
        <title>HSV-1 ICP22 Is a Selective Viral Repressor of Cellular RNA Polymerase II-Mediated Transcription Elongation.</title>
        <authorList>
            <person name="Isa N.F."/>
            <person name="Bensaude O."/>
            <person name="Aziz N.C."/>
            <person name="Murphy S."/>
        </authorList>
    </citation>
    <scope>INTERACTION WITH HHV-1 TRANSCRIPTIONAL REGULATOR ICP22 (MICROBIAL INFECTION)</scope>
</reference>
<reference key="29">
    <citation type="journal article" date="2007" name="Nature">
        <title>Patterns of somatic mutation in human cancer genomes.</title>
        <authorList>
            <person name="Greenman C."/>
            <person name="Stephens P."/>
            <person name="Smith R."/>
            <person name="Dalgliesh G.L."/>
            <person name="Hunter C."/>
            <person name="Bignell G."/>
            <person name="Davies H."/>
            <person name="Teague J."/>
            <person name="Butler A."/>
            <person name="Stevens C."/>
            <person name="Edkins S."/>
            <person name="O'Meara S."/>
            <person name="Vastrik I."/>
            <person name="Schmidt E.E."/>
            <person name="Avis T."/>
            <person name="Barthorpe S."/>
            <person name="Bhamra G."/>
            <person name="Buck G."/>
            <person name="Choudhury B."/>
            <person name="Clements J."/>
            <person name="Cole J."/>
            <person name="Dicks E."/>
            <person name="Forbes S."/>
            <person name="Gray K."/>
            <person name="Halliday K."/>
            <person name="Harrison R."/>
            <person name="Hills K."/>
            <person name="Hinton J."/>
            <person name="Jenkinson A."/>
            <person name="Jones D."/>
            <person name="Menzies A."/>
            <person name="Mironenko T."/>
            <person name="Perry J."/>
            <person name="Raine K."/>
            <person name="Richardson D."/>
            <person name="Shepherd R."/>
            <person name="Small A."/>
            <person name="Tofts C."/>
            <person name="Varian J."/>
            <person name="Webb T."/>
            <person name="West S."/>
            <person name="Widaa S."/>
            <person name="Yates A."/>
            <person name="Cahill D.P."/>
            <person name="Louis D.N."/>
            <person name="Goldstraw P."/>
            <person name="Nicholson A.G."/>
            <person name="Brasseur F."/>
            <person name="Looijenga L."/>
            <person name="Weber B.L."/>
            <person name="Chiew Y.-E."/>
            <person name="DeFazio A."/>
            <person name="Greaves M.F."/>
            <person name="Green A.R."/>
            <person name="Campbell P."/>
            <person name="Birney E."/>
            <person name="Easton D.F."/>
            <person name="Chenevix-Trench G."/>
            <person name="Tan M.-H."/>
            <person name="Khoo S.K."/>
            <person name="Teh B.T."/>
            <person name="Yuen S.T."/>
            <person name="Leung S.Y."/>
            <person name="Wooster R."/>
            <person name="Futreal P.A."/>
            <person name="Stratton M.R."/>
        </authorList>
    </citation>
    <scope>VARIANTS [LARGE SCALE ANALYSIS] ALA-494; ALA-500; ARG-670 AND MET-1170</scope>
</reference>
<reference key="30">
    <citation type="journal article" date="2016" name="Nat. Genet.">
        <title>Distinct genetic architectures for syndromic and nonsyndromic congenital heart defects identified by exome sequencing.</title>
        <authorList>
            <consortium name="INTERVAL Study"/>
            <consortium name="UK10K Consortium"/>
            <consortium name="Deciphering Developmental Disorders Study"/>
            <person name="Sifrim A."/>
            <person name="Hitz M.P."/>
            <person name="Wilsdon A."/>
            <person name="Breckpot J."/>
            <person name="Turki S.H."/>
            <person name="Thienpont B."/>
            <person name="McRae J."/>
            <person name="Fitzgerald T.W."/>
            <person name="Singh T."/>
            <person name="Swaminathan G.J."/>
            <person name="Prigmore E."/>
            <person name="Rajan D."/>
            <person name="Abdul-Khaliq H."/>
            <person name="Banka S."/>
            <person name="Bauer U.M."/>
            <person name="Bentham J."/>
            <person name="Berger F."/>
            <person name="Bhattacharya S."/>
            <person name="Bu'Lock F."/>
            <person name="Canham N."/>
            <person name="Colgiu I.G."/>
            <person name="Cosgrove C."/>
            <person name="Cox H."/>
            <person name="Daehnert I."/>
            <person name="Daly A."/>
            <person name="Danesh J."/>
            <person name="Fryer A."/>
            <person name="Gewillig M."/>
            <person name="Hobson E."/>
            <person name="Hoff K."/>
            <person name="Homfray T."/>
            <person name="Kahlert A.K."/>
            <person name="Ketley A."/>
            <person name="Kramer H.H."/>
            <person name="Lachlan K."/>
            <person name="Lampe A.K."/>
            <person name="Louw J.J."/>
            <person name="Manickara A.K."/>
            <person name="Manase D."/>
            <person name="McCarthy K.P."/>
            <person name="Metcalfe K."/>
            <person name="Moore C."/>
            <person name="Newbury-Ecob R."/>
            <person name="Omer S.O."/>
            <person name="Ouwehand W.H."/>
            <person name="Park S.M."/>
            <person name="Parker M.J."/>
            <person name="Pickardt T."/>
            <person name="Pollard M.O."/>
            <person name="Robert L."/>
            <person name="Roberts D.J."/>
            <person name="Sambrook J."/>
            <person name="Setchfield K."/>
            <person name="Stiller B."/>
            <person name="Thornborough C."/>
            <person name="Toka O."/>
            <person name="Watkins H."/>
            <person name="Williams D."/>
            <person name="Wright M."/>
            <person name="Mital S."/>
            <person name="Daubeney P.E."/>
            <person name="Keavney B."/>
            <person name="Goodship J."/>
            <person name="Abu-Sulaiman R.M."/>
            <person name="Klaassen S."/>
            <person name="Wright C.F."/>
            <person name="Firth H.V."/>
            <person name="Barrett J.C."/>
            <person name="Devriendt K."/>
            <person name="FitzPatrick D.R."/>
            <person name="Brook J.D."/>
            <person name="Hurles M.E."/>
        </authorList>
    </citation>
    <scope>INVOLVEMENT IN CHDFIDD</scope>
    <scope>VARIANTS CHDFIDD ARG-714; ARG-717; GLN-751 AND SER-842</scope>
</reference>
<reference key="31">
    <citation type="journal article" date="2017" name="Genome Med.">
        <title>Phenotypic and molecular characterisation of CDK13-related congenital heart defects, dysmorphic facial features and intellectual developmental disorders.</title>
        <authorList>
            <person name="Bostwick B.L."/>
            <person name="McLean S."/>
            <person name="Posey J.E."/>
            <person name="Streff H.E."/>
            <person name="Gripp K.W."/>
            <person name="Blesson A."/>
            <person name="Powell-Hamilton N."/>
            <person name="Tusi J."/>
            <person name="Stevenson D.A."/>
            <person name="Farrelly E."/>
            <person name="Hudgins L."/>
            <person name="Yang Y."/>
            <person name="Xia F."/>
            <person name="Wang X."/>
            <person name="Liu P."/>
            <person name="Walkiewicz M."/>
            <person name="McGuire M."/>
            <person name="Grange D.K."/>
            <person name="Andrews M.V."/>
            <person name="Hummel M."/>
            <person name="Madan-Khetarpal S."/>
            <person name="Infante E."/>
            <person name="Coban-Akdemir Z."/>
            <person name="Miszalski-Jamka K."/>
            <person name="Jefferies J.L."/>
            <person name="Rosenfeld J.A."/>
            <person name="Emrick L."/>
            <person name="Nugent K.M."/>
            <person name="Lupski J.R."/>
            <person name="Belmont J.W."/>
            <person name="Lee B."/>
            <person name="Lalani S.R."/>
        </authorList>
    </citation>
    <scope>VARIANTS CHDFIDD GLU-734; ASP-842 AND SER-842</scope>
</reference>
<dbReference type="EC" id="2.7.11.22"/>
<dbReference type="EC" id="2.7.11.23"/>
<dbReference type="EMBL" id="AJ297709">
    <property type="protein sequence ID" value="CAC10400.1"/>
    <property type="molecule type" value="mRNA"/>
</dbReference>
<dbReference type="EMBL" id="AJ297710">
    <property type="protein sequence ID" value="CAC10401.1"/>
    <property type="molecule type" value="mRNA"/>
</dbReference>
<dbReference type="EMBL" id="AY679523">
    <property type="protein sequence ID" value="AAT74623.1"/>
    <property type="molecule type" value="Genomic_DNA"/>
</dbReference>
<dbReference type="EMBL" id="AC072061">
    <property type="protein sequence ID" value="AAS07490.1"/>
    <property type="status" value="ALT_SEQ"/>
    <property type="molecule type" value="Genomic_DNA"/>
</dbReference>
<dbReference type="EMBL" id="AC072061">
    <property type="protein sequence ID" value="AAS07491.1"/>
    <property type="molecule type" value="Genomic_DNA"/>
</dbReference>
<dbReference type="EMBL" id="AC006023">
    <property type="protein sequence ID" value="AAD54514.1"/>
    <property type="molecule type" value="Genomic_DNA"/>
</dbReference>
<dbReference type="EMBL" id="M80629">
    <property type="protein sequence ID" value="AAA58424.1"/>
    <property type="status" value="ALT_FRAME"/>
    <property type="molecule type" value="mRNA"/>
</dbReference>
<dbReference type="EMBL" id="AK223053">
    <property type="protein sequence ID" value="BAD96773.1"/>
    <property type="molecule type" value="mRNA"/>
</dbReference>
<dbReference type="EMBL" id="AB058694">
    <property type="protein sequence ID" value="BAB47420.1"/>
    <property type="molecule type" value="mRNA"/>
</dbReference>
<dbReference type="CCDS" id="CCDS5461.1">
    <molecule id="Q14004-1"/>
</dbReference>
<dbReference type="CCDS" id="CCDS5462.1">
    <molecule id="Q14004-2"/>
</dbReference>
<dbReference type="PIR" id="A38197">
    <property type="entry name" value="A38197"/>
</dbReference>
<dbReference type="RefSeq" id="NP_003709.3">
    <molecule id="Q14004-1"/>
    <property type="nucleotide sequence ID" value="NM_003718.4"/>
</dbReference>
<dbReference type="RefSeq" id="NP_112557.2">
    <molecule id="Q14004-2"/>
    <property type="nucleotide sequence ID" value="NM_031267.3"/>
</dbReference>
<dbReference type="PDB" id="5EFQ">
    <property type="method" value="X-ray"/>
    <property type="resolution" value="2.00 A"/>
    <property type="chains" value="A/C=694-1039"/>
</dbReference>
<dbReference type="PDB" id="7NXJ">
    <property type="method" value="X-ray"/>
    <property type="resolution" value="2.36 A"/>
    <property type="chains" value="A/C=694-1039"/>
</dbReference>
<dbReference type="PDBsum" id="5EFQ"/>
<dbReference type="PDBsum" id="7NXJ"/>
<dbReference type="SMR" id="Q14004"/>
<dbReference type="BioGRID" id="114176">
    <property type="interactions" value="155"/>
</dbReference>
<dbReference type="ComplexPortal" id="CPX-359">
    <property type="entry name" value="Cyclin K-CDK13 complex"/>
</dbReference>
<dbReference type="CORUM" id="Q14004"/>
<dbReference type="FunCoup" id="Q14004">
    <property type="interactions" value="4545"/>
</dbReference>
<dbReference type="IntAct" id="Q14004">
    <property type="interactions" value="102"/>
</dbReference>
<dbReference type="MINT" id="Q14004"/>
<dbReference type="STRING" id="9606.ENSP00000181839"/>
<dbReference type="BindingDB" id="Q14004"/>
<dbReference type="ChEMBL" id="CHEMBL1795192"/>
<dbReference type="DrugCentral" id="Q14004"/>
<dbReference type="GuidetoPHARMACOLOGY" id="1966"/>
<dbReference type="GlyCosmos" id="Q14004">
    <property type="glycosylation" value="6 sites, 2 glycans"/>
</dbReference>
<dbReference type="GlyGen" id="Q14004">
    <property type="glycosylation" value="10 sites, 2 O-linked glycans (10 sites)"/>
</dbReference>
<dbReference type="iPTMnet" id="Q14004"/>
<dbReference type="PhosphoSitePlus" id="Q14004"/>
<dbReference type="SwissPalm" id="Q14004"/>
<dbReference type="BioMuta" id="CDK13"/>
<dbReference type="DMDM" id="66774048"/>
<dbReference type="CPTAC" id="non-CPTAC-2883"/>
<dbReference type="CPTAC" id="non-CPTAC-2884"/>
<dbReference type="jPOST" id="Q14004"/>
<dbReference type="MassIVE" id="Q14004"/>
<dbReference type="PaxDb" id="9606-ENSP00000181839"/>
<dbReference type="PeptideAtlas" id="Q14004"/>
<dbReference type="ProteomicsDB" id="59786">
    <molecule id="Q14004-1"/>
</dbReference>
<dbReference type="ProteomicsDB" id="59787">
    <molecule id="Q14004-2"/>
</dbReference>
<dbReference type="Pumba" id="Q14004"/>
<dbReference type="Antibodypedia" id="26726">
    <property type="antibodies" value="205 antibodies from 28 providers"/>
</dbReference>
<dbReference type="DNASU" id="8621"/>
<dbReference type="Ensembl" id="ENST00000181839.10">
    <molecule id="Q14004-1"/>
    <property type="protein sequence ID" value="ENSP00000181839.4"/>
    <property type="gene ID" value="ENSG00000065883.18"/>
</dbReference>
<dbReference type="Ensembl" id="ENST00000340829.10">
    <molecule id="Q14004-2"/>
    <property type="protein sequence ID" value="ENSP00000340557.5"/>
    <property type="gene ID" value="ENSG00000065883.18"/>
</dbReference>
<dbReference type="GeneID" id="8621"/>
<dbReference type="KEGG" id="hsa:8621"/>
<dbReference type="MANE-Select" id="ENST00000181839.10">
    <property type="protein sequence ID" value="ENSP00000181839.4"/>
    <property type="RefSeq nucleotide sequence ID" value="NM_003718.5"/>
    <property type="RefSeq protein sequence ID" value="NP_003709.3"/>
</dbReference>
<dbReference type="UCSC" id="uc003thh.5">
    <molecule id="Q14004-1"/>
    <property type="organism name" value="human"/>
</dbReference>
<dbReference type="AGR" id="HGNC:1733"/>
<dbReference type="CTD" id="8621"/>
<dbReference type="DisGeNET" id="8621"/>
<dbReference type="GeneCards" id="CDK13"/>
<dbReference type="GeneReviews" id="CDK13"/>
<dbReference type="HGNC" id="HGNC:1733">
    <property type="gene designation" value="CDK13"/>
</dbReference>
<dbReference type="HPA" id="ENSG00000065883">
    <property type="expression patterns" value="Low tissue specificity"/>
</dbReference>
<dbReference type="MalaCards" id="CDK13"/>
<dbReference type="MIM" id="603309">
    <property type="type" value="gene"/>
</dbReference>
<dbReference type="MIM" id="617360">
    <property type="type" value="phenotype"/>
</dbReference>
<dbReference type="neXtProt" id="NX_Q14004"/>
<dbReference type="OpenTargets" id="ENSG00000065883"/>
<dbReference type="Orphanet" id="646278">
    <property type="disease" value="CDK13-related developmental delay-intellectual disability-facial dysmorphism-congenital heart defects syndrome"/>
</dbReference>
<dbReference type="PharmGKB" id="PA26264"/>
<dbReference type="VEuPathDB" id="HostDB:ENSG00000065883"/>
<dbReference type="eggNOG" id="KOG0600">
    <property type="taxonomic scope" value="Eukaryota"/>
</dbReference>
<dbReference type="GeneTree" id="ENSGT00940000157852"/>
<dbReference type="HOGENOM" id="CLU_004166_3_0_1"/>
<dbReference type="InParanoid" id="Q14004"/>
<dbReference type="OrthoDB" id="28397at2759"/>
<dbReference type="PAN-GO" id="Q14004">
    <property type="GO annotations" value="8 GO annotations based on evolutionary models"/>
</dbReference>
<dbReference type="PhylomeDB" id="Q14004"/>
<dbReference type="TreeFam" id="TF101060"/>
<dbReference type="BRENDA" id="2.7.11.22">
    <property type="organism ID" value="2681"/>
</dbReference>
<dbReference type="BRENDA" id="2.7.11.23">
    <property type="organism ID" value="2681"/>
</dbReference>
<dbReference type="PathwayCommons" id="Q14004"/>
<dbReference type="Reactome" id="R-HSA-6796648">
    <property type="pathway name" value="TP53 Regulates Transcription of DNA Repair Genes"/>
</dbReference>
<dbReference type="Reactome" id="R-HSA-6798695">
    <property type="pathway name" value="Neutrophil degranulation"/>
</dbReference>
<dbReference type="SignaLink" id="Q14004"/>
<dbReference type="SIGNOR" id="Q14004"/>
<dbReference type="BioGRID-ORCS" id="8621">
    <property type="hits" value="72 hits in 1189 CRISPR screens"/>
</dbReference>
<dbReference type="CD-CODE" id="804901D1">
    <property type="entry name" value="Nuclear speckle"/>
</dbReference>
<dbReference type="CD-CODE" id="91857CE7">
    <property type="entry name" value="Nucleolus"/>
</dbReference>
<dbReference type="ChiTaRS" id="CDK13">
    <property type="organism name" value="human"/>
</dbReference>
<dbReference type="GeneWiki" id="CDC2L5"/>
<dbReference type="GenomeRNAi" id="8621"/>
<dbReference type="Pharos" id="Q14004">
    <property type="development level" value="Tchem"/>
</dbReference>
<dbReference type="PRO" id="PR:Q14004"/>
<dbReference type="Proteomes" id="UP000005640">
    <property type="component" value="Chromosome 7"/>
</dbReference>
<dbReference type="RNAct" id="Q14004">
    <property type="molecule type" value="protein"/>
</dbReference>
<dbReference type="Bgee" id="ENSG00000065883">
    <property type="expression patterns" value="Expressed in buccal mucosa cell and 213 other cell types or tissues"/>
</dbReference>
<dbReference type="ExpressionAtlas" id="Q14004">
    <property type="expression patterns" value="baseline and differential"/>
</dbReference>
<dbReference type="GO" id="GO:0002945">
    <property type="term" value="C:cyclin K-CDK13 complex"/>
    <property type="evidence" value="ECO:0000353"/>
    <property type="project" value="MGI"/>
</dbReference>
<dbReference type="GO" id="GO:0008024">
    <property type="term" value="C:cyclin/CDK positive transcription elongation factor complex"/>
    <property type="evidence" value="ECO:0000318"/>
    <property type="project" value="GO_Central"/>
</dbReference>
<dbReference type="GO" id="GO:0005829">
    <property type="term" value="C:cytosol"/>
    <property type="evidence" value="ECO:0000314"/>
    <property type="project" value="HPA"/>
</dbReference>
<dbReference type="GO" id="GO:0005576">
    <property type="term" value="C:extracellular region"/>
    <property type="evidence" value="ECO:0000304"/>
    <property type="project" value="Reactome"/>
</dbReference>
<dbReference type="GO" id="GO:0005615">
    <property type="term" value="C:extracellular space"/>
    <property type="evidence" value="ECO:0007005"/>
    <property type="project" value="UniProtKB"/>
</dbReference>
<dbReference type="GO" id="GO:1904813">
    <property type="term" value="C:ficolin-1-rich granule lumen"/>
    <property type="evidence" value="ECO:0000304"/>
    <property type="project" value="Reactome"/>
</dbReference>
<dbReference type="GO" id="GO:0005794">
    <property type="term" value="C:Golgi apparatus"/>
    <property type="evidence" value="ECO:0000314"/>
    <property type="project" value="HPA"/>
</dbReference>
<dbReference type="GO" id="GO:0019908">
    <property type="term" value="C:nuclear cyclin-dependent protein kinase holoenzyme complex"/>
    <property type="evidence" value="ECO:0000250"/>
    <property type="project" value="UniProtKB"/>
</dbReference>
<dbReference type="GO" id="GO:0016607">
    <property type="term" value="C:nuclear speck"/>
    <property type="evidence" value="ECO:0000314"/>
    <property type="project" value="HPA"/>
</dbReference>
<dbReference type="GO" id="GO:0005654">
    <property type="term" value="C:nucleoplasm"/>
    <property type="evidence" value="ECO:0000304"/>
    <property type="project" value="Reactome"/>
</dbReference>
<dbReference type="GO" id="GO:0005634">
    <property type="term" value="C:nucleus"/>
    <property type="evidence" value="ECO:0000318"/>
    <property type="project" value="GO_Central"/>
</dbReference>
<dbReference type="GO" id="GO:0005524">
    <property type="term" value="F:ATP binding"/>
    <property type="evidence" value="ECO:0007669"/>
    <property type="project" value="UniProtKB-KW"/>
</dbReference>
<dbReference type="GO" id="GO:0030332">
    <property type="term" value="F:cyclin binding"/>
    <property type="evidence" value="ECO:0000353"/>
    <property type="project" value="MGI"/>
</dbReference>
<dbReference type="GO" id="GO:0004693">
    <property type="term" value="F:cyclin-dependent protein serine/threonine kinase activity"/>
    <property type="evidence" value="ECO:0007669"/>
    <property type="project" value="UniProtKB-EC"/>
</dbReference>
<dbReference type="GO" id="GO:0004672">
    <property type="term" value="F:protein kinase activity"/>
    <property type="evidence" value="ECO:0000304"/>
    <property type="project" value="ProtInc"/>
</dbReference>
<dbReference type="GO" id="GO:0019901">
    <property type="term" value="F:protein kinase binding"/>
    <property type="evidence" value="ECO:0007669"/>
    <property type="project" value="Ensembl"/>
</dbReference>
<dbReference type="GO" id="GO:0106310">
    <property type="term" value="F:protein serine kinase activity"/>
    <property type="evidence" value="ECO:0007669"/>
    <property type="project" value="RHEA"/>
</dbReference>
<dbReference type="GO" id="GO:0003723">
    <property type="term" value="F:RNA binding"/>
    <property type="evidence" value="ECO:0007005"/>
    <property type="project" value="UniProtKB"/>
</dbReference>
<dbReference type="GO" id="GO:0008353">
    <property type="term" value="F:RNA polymerase II CTD heptapeptide repeat kinase activity"/>
    <property type="evidence" value="ECO:0000314"/>
    <property type="project" value="UniProtKB"/>
</dbReference>
<dbReference type="GO" id="GO:0000380">
    <property type="term" value="P:alternative mRNA splicing, via spliceosome"/>
    <property type="evidence" value="ECO:0000250"/>
    <property type="project" value="UniProtKB"/>
</dbReference>
<dbReference type="GO" id="GO:0030097">
    <property type="term" value="P:hemopoiesis"/>
    <property type="evidence" value="ECO:0000315"/>
    <property type="project" value="UniProtKB"/>
</dbReference>
<dbReference type="GO" id="GO:2000737">
    <property type="term" value="P:negative regulation of stem cell differentiation"/>
    <property type="evidence" value="ECO:0007669"/>
    <property type="project" value="Ensembl"/>
</dbReference>
<dbReference type="GO" id="GO:0045944">
    <property type="term" value="P:positive regulation of transcription by RNA polymerase II"/>
    <property type="evidence" value="ECO:0000314"/>
    <property type="project" value="UniProtKB"/>
</dbReference>
<dbReference type="GO" id="GO:0032968">
    <property type="term" value="P:positive regulation of transcription elongation by RNA polymerase II"/>
    <property type="evidence" value="ECO:0000314"/>
    <property type="project" value="ComplexPortal"/>
</dbReference>
<dbReference type="GO" id="GO:0009966">
    <property type="term" value="P:regulation of signal transduction"/>
    <property type="evidence" value="ECO:0000314"/>
    <property type="project" value="ComplexPortal"/>
</dbReference>
<dbReference type="CDD" id="cd07864">
    <property type="entry name" value="STKc_CDK12"/>
    <property type="match status" value="1"/>
</dbReference>
<dbReference type="FunFam" id="1.10.510.10:FF:000102">
    <property type="entry name" value="cyclin-dependent kinase 12 isoform X1"/>
    <property type="match status" value="1"/>
</dbReference>
<dbReference type="FunFam" id="3.30.200.20:FF:000074">
    <property type="entry name" value="cyclin-dependent kinase 12 isoform X2"/>
    <property type="match status" value="1"/>
</dbReference>
<dbReference type="Gene3D" id="3.30.200.20">
    <property type="entry name" value="Phosphorylase Kinase, domain 1"/>
    <property type="match status" value="1"/>
</dbReference>
<dbReference type="Gene3D" id="1.10.510.10">
    <property type="entry name" value="Transferase(Phosphotransferase) domain 1"/>
    <property type="match status" value="1"/>
</dbReference>
<dbReference type="IDEAL" id="IID00723"/>
<dbReference type="InterPro" id="IPR050108">
    <property type="entry name" value="CDK"/>
</dbReference>
<dbReference type="InterPro" id="IPR011009">
    <property type="entry name" value="Kinase-like_dom_sf"/>
</dbReference>
<dbReference type="InterPro" id="IPR000719">
    <property type="entry name" value="Prot_kinase_dom"/>
</dbReference>
<dbReference type="InterPro" id="IPR017441">
    <property type="entry name" value="Protein_kinase_ATP_BS"/>
</dbReference>
<dbReference type="InterPro" id="IPR008271">
    <property type="entry name" value="Ser/Thr_kinase_AS"/>
</dbReference>
<dbReference type="PANTHER" id="PTHR24056">
    <property type="entry name" value="CELL DIVISION PROTEIN KINASE"/>
    <property type="match status" value="1"/>
</dbReference>
<dbReference type="PANTHER" id="PTHR24056:SF459">
    <property type="entry name" value="CYCLIN-DEPENDENT KINASE 13"/>
    <property type="match status" value="1"/>
</dbReference>
<dbReference type="Pfam" id="PF00069">
    <property type="entry name" value="Pkinase"/>
    <property type="match status" value="1"/>
</dbReference>
<dbReference type="SMART" id="SM00220">
    <property type="entry name" value="S_TKc"/>
    <property type="match status" value="1"/>
</dbReference>
<dbReference type="SUPFAM" id="SSF56112">
    <property type="entry name" value="Protein kinase-like (PK-like)"/>
    <property type="match status" value="1"/>
</dbReference>
<dbReference type="PROSITE" id="PS00107">
    <property type="entry name" value="PROTEIN_KINASE_ATP"/>
    <property type="match status" value="1"/>
</dbReference>
<dbReference type="PROSITE" id="PS50011">
    <property type="entry name" value="PROTEIN_KINASE_DOM"/>
    <property type="match status" value="1"/>
</dbReference>
<dbReference type="PROSITE" id="PS00108">
    <property type="entry name" value="PROTEIN_KINASE_ST"/>
    <property type="match status" value="1"/>
</dbReference>
<sequence length="1512" mass="164923">MPSSSDTALGGGGGLSWAEKKLEERRKRRRFLSPQQPPLLLPLLQPQLLQPPPPPPPLLFLAAPGTAAAAAAAAAASSSCFSPGPPLEVKRLARGKRRAGGRQKRRRGPRAGQEAEKRRVFSLPQPQQDGGGGASSGGGVTPLVEYEDVSSQSEQGLLLGGASAATAATAAGGTGGSGGSPASSSGTQRRGEGSERRPRRDRRSSSGRSKERHREHRRRDGQRGGSEASKSRSRHSHSGEERAEVAKSGSSSSSGGRRKSASATSSSSSSRKDRDSKAHRSRTKSSKEPPSAYKEPPKAYREDKTEPKAYRRRRSLSPLGGRDDSPVSHRASQSLRSRKSPSPAGGGSSPYSRRLPRSPSPYSRRRSPSYSRHSSYERGGDVSPSPYSSSSWRRSRSPYSPVLRRSGKSRSRSPYSSRHSRSRSRHRLSRSRSRHSSISPSTLTLKSSLAAELNKNKKARAAEAARAAEAAKAAEATKAAEAAAKAAKASNTSTPTKGNTETSASASQTNHVKDVKKIKIEHAPSPSSGGTLKNDKAKTKPPLQVTKVENNLIVDKATKKAVIVGKESKSAATKEESVSLKEKTKPLTPSIGAKEKEQHVALVTSTLPPLPLPPMLPEDKEADSLRGNISVKAVKKEVEKKLRCLLADLPLPPELPGGDDLSKSPEEKKTATQLHSKRRPKICGPRYGETKEKDIDWGKRCVDKFDIIGIIGEGTYGQVYKARDKDTGEMVALKKVRLDNEKEGFPITAIREIKILRQLTHQSIINMKEIVTDKEDALDFKKDKGAFYLVFEYMDHDLMGLLESGLVHFNENHIKSFMRQLMEGLDYCHKKNFLHRDIKCSNILLNNRGQIKLADFGLARLYSSEESRPYTNKVITLWYRPPELLLGEERYTPAIDVWSCGCILGELFTKKPIFQANQELAQLELISRICGSPCPAVWPDVIKLPYFNTMKPKKQYRRKLREEFVFIPAAALDLFDYMLALDPSKRCTAEQALQCEFLRDVEPSKMPPPDLPLWQDCHELWSKKRRRQKQMGMTDDVSTIKAPRKDLSLGLDDSRTNTPQGVLPSSQLKSQGSSNVAPVKTGPGQHLNHSELAILLNLLQSKTSVNMADFVQVLNIKVNSETQQQLNKINLPAGILATGEKQTDPSTPQQESSKPLGGIQPSSQTIQPKVETDAAQAAVQSAFAVLLTQLIKAQQSKQKDVLLEERENGSGHEASLQLRPPPEPSTPVSGQDDLIQHQDMRILELTPEPDRPRILPPDQRPPEPPEPPPVTEEDLDYRTENQHVPTTSSSLTDPHAGVKAALLQLLAQHQPQDDPKREGGIDYQAGDTYVSTSDYKDNFGSSSFSSAPYVSNDGLGSSSAPPLERRSFIGNSDIQSLDNYSTASSHSGGPPQPSAFSESFPSSVAGYGDIYLNAGPMLFSGDKDHRFEYSHGPIAVLANSSDPSTGPESTHPLPAKMHNYNYGGNLQENPSGPSLMHGQTWTSPAQGPGYSQGYRGHISTSTGRGRGRGLPY</sequence>
<name>CDK13_HUMAN</name>
<organism>
    <name type="scientific">Homo sapiens</name>
    <name type="common">Human</name>
    <dbReference type="NCBI Taxonomy" id="9606"/>
    <lineage>
        <taxon>Eukaryota</taxon>
        <taxon>Metazoa</taxon>
        <taxon>Chordata</taxon>
        <taxon>Craniata</taxon>
        <taxon>Vertebrata</taxon>
        <taxon>Euteleostomi</taxon>
        <taxon>Mammalia</taxon>
        <taxon>Eutheria</taxon>
        <taxon>Euarchontoglires</taxon>
        <taxon>Primates</taxon>
        <taxon>Haplorrhini</taxon>
        <taxon>Catarrhini</taxon>
        <taxon>Hominidae</taxon>
        <taxon>Homo</taxon>
    </lineage>
</organism>
<evidence type="ECO:0000250" key="1"/>
<evidence type="ECO:0000250" key="2">
    <source>
        <dbReference type="UniProtKB" id="Q69ZA1"/>
    </source>
</evidence>
<evidence type="ECO:0000255" key="3">
    <source>
        <dbReference type="PROSITE-ProRule" id="PRU00159"/>
    </source>
</evidence>
<evidence type="ECO:0000255" key="4">
    <source>
        <dbReference type="PROSITE-ProRule" id="PRU10027"/>
    </source>
</evidence>
<evidence type="ECO:0000256" key="5">
    <source>
        <dbReference type="SAM" id="MobiDB-lite"/>
    </source>
</evidence>
<evidence type="ECO:0000269" key="6">
    <source>
    </source>
</evidence>
<evidence type="ECO:0000269" key="7">
    <source>
    </source>
</evidence>
<evidence type="ECO:0000269" key="8">
    <source>
    </source>
</evidence>
<evidence type="ECO:0000269" key="9">
    <source>
    </source>
</evidence>
<evidence type="ECO:0000269" key="10">
    <source>
    </source>
</evidence>
<evidence type="ECO:0000269" key="11">
    <source>
    </source>
</evidence>
<evidence type="ECO:0000269" key="12">
    <source>
    </source>
</evidence>
<evidence type="ECO:0000269" key="13">
    <source>
    </source>
</evidence>
<evidence type="ECO:0000269" key="14">
    <source>
    </source>
</evidence>
<evidence type="ECO:0000269" key="15">
    <source>
    </source>
</evidence>
<evidence type="ECO:0000269" key="16">
    <source>
    </source>
</evidence>
<evidence type="ECO:0000269" key="17">
    <source ref="2"/>
</evidence>
<evidence type="ECO:0000303" key="18">
    <source>
    </source>
</evidence>
<evidence type="ECO:0000303" key="19">
    <source ref="5"/>
</evidence>
<evidence type="ECO:0000305" key="20"/>
<evidence type="ECO:0007744" key="21">
    <source>
    </source>
</evidence>
<evidence type="ECO:0007744" key="22">
    <source>
    </source>
</evidence>
<evidence type="ECO:0007744" key="23">
    <source>
    </source>
</evidence>
<evidence type="ECO:0007744" key="24">
    <source>
    </source>
</evidence>
<evidence type="ECO:0007744" key="25">
    <source>
    </source>
</evidence>
<evidence type="ECO:0007744" key="26">
    <source>
    </source>
</evidence>
<evidence type="ECO:0007744" key="27">
    <source>
    </source>
</evidence>
<evidence type="ECO:0007744" key="28">
    <source>
    </source>
</evidence>
<evidence type="ECO:0007744" key="29">
    <source>
    </source>
</evidence>
<evidence type="ECO:0007829" key="30">
    <source>
        <dbReference type="PDB" id="5EFQ"/>
    </source>
</evidence>
<accession>Q14004</accession>
<accession>Q53G78</accession>
<accession>Q6DKQ9</accession>
<accession>Q75MH4</accession>
<accession>Q75MH5</accession>
<accession>Q96JN4</accession>
<accession>Q9H4A0</accession>
<accession>Q9H4A1</accession>
<accession>Q9UDR4</accession>
<comment type="function">
    <text evidence="7 8 10 11">Cyclin-dependent kinase which displays CTD kinase activity and is required for RNA splicing. Has CTD kinase activity by hyperphosphorylating the C-terminal heptapeptide repeat domain (CTD) of the largest RNA polymerase II subunit RPB1, thereby acting as a key regulator of transcription elongation. Required for RNA splicing, probably by phosphorylating SRSF1/SF2. Required during hematopoiesis. In case of infection by HIV-1 virus, interacts with HIV-1 Tat protein acetylated at 'Lys-50' and 'Lys-51', thereby increasing HIV-1 mRNA splicing and promoting the production of the doubly spliced HIV-1 protein Nef.</text>
</comment>
<comment type="catalytic activity">
    <reaction evidence="11">
        <text>[DNA-directed RNA polymerase] + ATP = phospho-[DNA-directed RNA polymerase] + ADP + H(+)</text>
        <dbReference type="Rhea" id="RHEA:10216"/>
        <dbReference type="Rhea" id="RHEA-COMP:11321"/>
        <dbReference type="Rhea" id="RHEA-COMP:11322"/>
        <dbReference type="ChEBI" id="CHEBI:15378"/>
        <dbReference type="ChEBI" id="CHEBI:30616"/>
        <dbReference type="ChEBI" id="CHEBI:43176"/>
        <dbReference type="ChEBI" id="CHEBI:68546"/>
        <dbReference type="ChEBI" id="CHEBI:456216"/>
        <dbReference type="EC" id="2.7.11.23"/>
    </reaction>
</comment>
<comment type="catalytic activity">
    <reaction evidence="11">
        <text>L-seryl-[protein] + ATP = O-phospho-L-seryl-[protein] + ADP + H(+)</text>
        <dbReference type="Rhea" id="RHEA:17989"/>
        <dbReference type="Rhea" id="RHEA-COMP:9863"/>
        <dbReference type="Rhea" id="RHEA-COMP:11604"/>
        <dbReference type="ChEBI" id="CHEBI:15378"/>
        <dbReference type="ChEBI" id="CHEBI:29999"/>
        <dbReference type="ChEBI" id="CHEBI:30616"/>
        <dbReference type="ChEBI" id="CHEBI:83421"/>
        <dbReference type="ChEBI" id="CHEBI:456216"/>
        <dbReference type="EC" id="2.7.11.22"/>
    </reaction>
</comment>
<comment type="catalytic activity">
    <reaction evidence="11">
        <text>L-threonyl-[protein] + ATP = O-phospho-L-threonyl-[protein] + ADP + H(+)</text>
        <dbReference type="Rhea" id="RHEA:46608"/>
        <dbReference type="Rhea" id="RHEA-COMP:11060"/>
        <dbReference type="Rhea" id="RHEA-COMP:11605"/>
        <dbReference type="ChEBI" id="CHEBI:15378"/>
        <dbReference type="ChEBI" id="CHEBI:30013"/>
        <dbReference type="ChEBI" id="CHEBI:30616"/>
        <dbReference type="ChEBI" id="CHEBI:61977"/>
        <dbReference type="ChEBI" id="CHEBI:456216"/>
        <dbReference type="EC" id="2.7.11.22"/>
    </reaction>
</comment>
<comment type="subunit">
    <text evidence="16">(Microbial infection) Interacts with human herpes virus 1 (HHV-1) transcriptional regulator ICP22.</text>
</comment>
<comment type="subunit">
    <text evidence="1 7 13">Interacts with CCNL1 and CCNL2 (By similarity). Interacts with CCNK. Interacts with C1QBP.</text>
</comment>
<comment type="subunit">
    <text evidence="10">(Microbial infection) Interacts with HIV-1 Tat.</text>
</comment>
<comment type="interaction">
    <interactant intactId="EBI-968626">
        <id>Q14004</id>
    </interactant>
    <interactant intactId="EBI-739806">
        <id>O75909</id>
        <label>CCNK</label>
    </interactant>
    <organismsDiffer>false</organismsDiffer>
    <experiments>10</experiments>
</comment>
<comment type="interaction">
    <interactant intactId="EBI-968626">
        <id>Q14004</id>
    </interactant>
    <interactant intactId="EBI-295634">
        <id>Q16543</id>
        <label>CDC37</label>
    </interactant>
    <organismsDiffer>false</organismsDiffer>
    <experiments>2</experiments>
</comment>
<comment type="interaction">
    <interactant intactId="EBI-6375898">
        <id>Q14004-2</id>
    </interactant>
    <interactant intactId="EBI-347528">
        <id>Q07021</id>
        <label>C1QBP</label>
    </interactant>
    <organismsDiffer>false</organismsDiffer>
    <experiments>6</experiments>
</comment>
<comment type="subcellular location">
    <subcellularLocation>
        <location evidence="7">Nucleus speckle</location>
    </subcellularLocation>
</comment>
<comment type="alternative products">
    <event type="alternative splicing"/>
    <isoform>
        <id>Q14004-1</id>
        <name>1</name>
        <sequence type="displayed"/>
    </isoform>
    <isoform>
        <id>Q14004-2</id>
        <name>2</name>
        <sequence type="described" ref="VSP_013579"/>
    </isoform>
</comment>
<comment type="tissue specificity">
    <text>Expressed in fetal brain, liver, muscle and in adult brain. Also expressed in neuroblastoma and glioblastoma tumors.</text>
</comment>
<comment type="RNA editing">
    <location>
        <position position="103" evidence="12"/>
    </location>
    <text>Edited at about 88%.</text>
</comment>
<comment type="disease" evidence="14 15">
    <disease id="DI-04952">
        <name>Congenital heart defects, dysmorphic facial features, and intellectual developmental disorder</name>
        <acronym>CHDFIDD</acronym>
        <description>An autosomal dominant syndrome characterized by atrial and/or ventricular septal congenital heart defects, facial dysmorphism with hypertelorism, upslanted palpebral fissures, epicanthal folds, ptosis, strabismus, posteriorly rotated ears, thin upper lip, and small mouth. Patients manifest global developmental delay, delayed walking and speech acquisition, and intellectual disability. Some patients have mild microcephaly, a small cerebral cortex, and agenesis of corpus callosum. More variable features include clinodactyly and/or camptodactyly of the fingers, hypotonia, and joint hypermobility.</description>
        <dbReference type="MIM" id="617360"/>
    </disease>
    <text>The disease is caused by variants affecting the gene represented in this entry.</text>
</comment>
<comment type="similarity">
    <text evidence="20">Belongs to the protein kinase superfamily. CMGC Ser/Thr protein kinase family. CDC2/CDKX subfamily.</text>
</comment>
<comment type="sequence caution" evidence="20">
    <conflict type="frameshift">
        <sequence resource="EMBL-CDS" id="AAA58424"/>
    </conflict>
</comment>
<comment type="sequence caution" evidence="20">
    <conflict type="erroneous gene model prediction">
        <sequence resource="EMBL-CDS" id="AAS07490"/>
    </conflict>
</comment>
<proteinExistence type="evidence at protein level"/>
<feature type="chain" id="PRO_0000085711" description="Cyclin-dependent kinase 13">
    <location>
        <begin position="1"/>
        <end position="1512"/>
    </location>
</feature>
<feature type="domain" description="Protein kinase" evidence="3">
    <location>
        <begin position="705"/>
        <end position="998"/>
    </location>
</feature>
<feature type="region of interest" description="Disordered" evidence="5">
    <location>
        <begin position="1"/>
        <end position="20"/>
    </location>
</feature>
<feature type="region of interest" description="Disordered" evidence="5">
    <location>
        <begin position="30"/>
        <end position="60"/>
    </location>
</feature>
<feature type="region of interest" description="Disordered" evidence="5">
    <location>
        <begin position="75"/>
        <end position="545"/>
    </location>
</feature>
<feature type="region of interest" description="Disordered" evidence="5">
    <location>
        <begin position="566"/>
        <end position="596"/>
    </location>
</feature>
<feature type="region of interest" description="Disordered" evidence="5">
    <location>
        <begin position="654"/>
        <end position="685"/>
    </location>
</feature>
<feature type="region of interest" description="Disordered" evidence="5">
    <location>
        <begin position="1025"/>
        <end position="1084"/>
    </location>
</feature>
<feature type="region of interest" description="Disordered" evidence="5">
    <location>
        <begin position="1138"/>
        <end position="1170"/>
    </location>
</feature>
<feature type="region of interest" description="Disordered" evidence="5">
    <location>
        <begin position="1201"/>
        <end position="1231"/>
    </location>
</feature>
<feature type="region of interest" description="Disordered" evidence="5">
    <location>
        <begin position="1245"/>
        <end position="1273"/>
    </location>
</feature>
<feature type="region of interest" description="Disordered" evidence="5">
    <location>
        <begin position="1379"/>
        <end position="1400"/>
    </location>
</feature>
<feature type="region of interest" description="Disordered" evidence="5">
    <location>
        <begin position="1468"/>
        <end position="1512"/>
    </location>
</feature>
<feature type="compositionally biased region" description="Pro residues" evidence="5">
    <location>
        <begin position="49"/>
        <end position="58"/>
    </location>
</feature>
<feature type="compositionally biased region" description="Basic residues" evidence="5">
    <location>
        <begin position="92"/>
        <end position="109"/>
    </location>
</feature>
<feature type="compositionally biased region" description="Gly residues" evidence="5">
    <location>
        <begin position="129"/>
        <end position="140"/>
    </location>
</feature>
<feature type="compositionally biased region" description="Low complexity" evidence="5">
    <location>
        <begin position="160"/>
        <end position="171"/>
    </location>
</feature>
<feature type="compositionally biased region" description="Basic and acidic residues" evidence="5">
    <location>
        <begin position="189"/>
        <end position="198"/>
    </location>
</feature>
<feature type="compositionally biased region" description="Basic residues" evidence="5">
    <location>
        <begin position="210"/>
        <end position="220"/>
    </location>
</feature>
<feature type="compositionally biased region" description="Low complexity" evidence="5">
    <location>
        <begin position="246"/>
        <end position="269"/>
    </location>
</feature>
<feature type="compositionally biased region" description="Basic and acidic residues" evidence="5">
    <location>
        <begin position="295"/>
        <end position="309"/>
    </location>
</feature>
<feature type="compositionally biased region" description="Low complexity" evidence="5">
    <location>
        <begin position="383"/>
        <end position="401"/>
    </location>
</feature>
<feature type="compositionally biased region" description="Basic residues" evidence="5">
    <location>
        <begin position="418"/>
        <end position="435"/>
    </location>
</feature>
<feature type="compositionally biased region" description="Low complexity" evidence="5">
    <location>
        <begin position="462"/>
        <end position="489"/>
    </location>
</feature>
<feature type="compositionally biased region" description="Polar residues" evidence="5">
    <location>
        <begin position="490"/>
        <end position="510"/>
    </location>
</feature>
<feature type="compositionally biased region" description="Basic and acidic residues" evidence="5">
    <location>
        <begin position="511"/>
        <end position="522"/>
    </location>
</feature>
<feature type="compositionally biased region" description="Basic and acidic residues" evidence="5">
    <location>
        <begin position="566"/>
        <end position="585"/>
    </location>
</feature>
<feature type="compositionally biased region" description="Basic and acidic residues" evidence="5">
    <location>
        <begin position="660"/>
        <end position="670"/>
    </location>
</feature>
<feature type="compositionally biased region" description="Basic and acidic residues" evidence="5">
    <location>
        <begin position="1043"/>
        <end position="1055"/>
    </location>
</feature>
<feature type="compositionally biased region" description="Polar residues" evidence="5">
    <location>
        <begin position="1056"/>
        <end position="1076"/>
    </location>
</feature>
<feature type="compositionally biased region" description="Polar residues" evidence="5">
    <location>
        <begin position="1144"/>
        <end position="1153"/>
    </location>
</feature>
<feature type="compositionally biased region" description="Basic and acidic residues" evidence="5">
    <location>
        <begin position="1201"/>
        <end position="1210"/>
    </location>
</feature>
<feature type="compositionally biased region" description="Pro residues" evidence="5">
    <location>
        <begin position="1254"/>
        <end position="1270"/>
    </location>
</feature>
<feature type="compositionally biased region" description="Polar residues" evidence="5">
    <location>
        <begin position="1468"/>
        <end position="1485"/>
    </location>
</feature>
<feature type="active site" description="Proton acceptor" evidence="3 4">
    <location>
        <position position="837"/>
    </location>
</feature>
<feature type="binding site" evidence="3">
    <location>
        <begin position="711"/>
        <end position="719"/>
    </location>
    <ligand>
        <name>ATP</name>
        <dbReference type="ChEBI" id="CHEBI:30616"/>
    </ligand>
</feature>
<feature type="binding site" evidence="3">
    <location>
        <position position="734"/>
    </location>
    <ligand>
        <name>ATP</name>
        <dbReference type="ChEBI" id="CHEBI:30616"/>
    </ligand>
</feature>
<feature type="modified residue" description="Phosphoserine" evidence="22 27 28">
    <location>
        <position position="315"/>
    </location>
</feature>
<feature type="modified residue" description="Phosphoserine" evidence="22 27 28">
    <location>
        <position position="317"/>
    </location>
</feature>
<feature type="modified residue" description="Phosphoserine" evidence="22 28">
    <location>
        <position position="325"/>
    </location>
</feature>
<feature type="modified residue" description="Phosphoserine" evidence="22">
    <location>
        <position position="340"/>
    </location>
</feature>
<feature type="modified residue" description="Phosphoserine" evidence="22">
    <location>
        <position position="342"/>
    </location>
</feature>
<feature type="modified residue" description="Phosphoserine" evidence="28">
    <location>
        <position position="358"/>
    </location>
</feature>
<feature type="modified residue" description="Phosphoserine" evidence="28">
    <location>
        <position position="360"/>
    </location>
</feature>
<feature type="modified residue" description="Phosphoserine" evidence="22 26 27 28">
    <location>
        <position position="383"/>
    </location>
</feature>
<feature type="modified residue" description="Phosphoserine" evidence="22 27">
    <location>
        <position position="395"/>
    </location>
</feature>
<feature type="modified residue" description="Phosphoserine" evidence="22 27">
    <location>
        <position position="397"/>
    </location>
</feature>
<feature type="modified residue" description="Phosphoserine" evidence="22 27">
    <location>
        <position position="400"/>
    </location>
</feature>
<feature type="modified residue" description="Phosphoserine" evidence="22 26 27 28">
    <location>
        <position position="437"/>
    </location>
</feature>
<feature type="modified residue" description="Phosphoserine" evidence="22 26 27 28">
    <location>
        <position position="439"/>
    </location>
</feature>
<feature type="modified residue" description="Phosphoserine" evidence="26 28">
    <location>
        <position position="525"/>
    </location>
</feature>
<feature type="modified residue" description="N6-acetyllysine" evidence="25">
    <location>
        <position position="556"/>
    </location>
</feature>
<feature type="modified residue" description="Phosphothreonine" evidence="28">
    <location>
        <position position="588"/>
    </location>
</feature>
<feature type="modified residue" description="Phosphothreonine" evidence="22 26 27 28">
    <location>
        <position position="871"/>
    </location>
</feature>
<feature type="modified residue" description="Phosphoserine" evidence="24 28">
    <location>
        <position position="1048"/>
    </location>
</feature>
<feature type="modified residue" description="Phosphothreonine" evidence="2">
    <location>
        <position position="1058"/>
    </location>
</feature>
<feature type="modified residue" description="Phosphothreonine" evidence="21 23 27 28">
    <location>
        <position position="1246"/>
    </location>
</feature>
<feature type="cross-link" description="Glycyl lysine isopeptide (Lys-Gly) (interchain with G-Cter in SUMO2)" evidence="29">
    <location>
        <position position="519"/>
    </location>
</feature>
<feature type="cross-link" description="Glycyl lysine isopeptide (Lys-Gly) (interchain with G-Cter in SUMO2)" evidence="29">
    <location>
        <position position="547"/>
    </location>
</feature>
<feature type="splice variant" id="VSP_013579" description="In isoform 2." evidence="18 19">
    <location>
        <begin position="1079"/>
        <end position="1138"/>
    </location>
</feature>
<feature type="sequence variant" id="VAR_066526" description="In RNA edited version.">
    <original>Q</original>
    <variation>R</variation>
    <location>
        <position position="103"/>
    </location>
</feature>
<feature type="sequence variant" id="VAR_053926" description="In dbSNP:rs13622.">
    <original>S</original>
    <variation>F</variation>
    <location>
        <position position="340"/>
    </location>
</feature>
<feature type="sequence variant" id="VAR_022381" description="In dbSNP:rs17537669." evidence="17">
    <original>P</original>
    <variation>A</variation>
    <location>
        <position position="356"/>
    </location>
</feature>
<feature type="sequence variant" id="VAR_022382" description="In dbSNP:rs3735137." evidence="17">
    <original>L</original>
    <variation>F</variation>
    <location>
        <position position="403"/>
    </location>
</feature>
<feature type="sequence variant" id="VAR_022383" description="In dbSNP:rs17496261." evidence="17">
    <original>R</original>
    <variation>Q</variation>
    <location>
        <position position="410"/>
    </location>
</feature>
<feature type="sequence variant" id="VAR_041965" description="In dbSNP:rs34624759." evidence="9">
    <original>T</original>
    <variation>A</variation>
    <location>
        <position position="494"/>
    </location>
</feature>
<feature type="sequence variant" id="VAR_022384" description="In dbSNP:rs3735135." evidence="9 17">
    <original>T</original>
    <variation>A</variation>
    <location>
        <position position="500"/>
    </location>
</feature>
<feature type="sequence variant" id="VAR_022385" description="In dbSNP:rs17496275." evidence="17">
    <original>S</original>
    <variation>G</variation>
    <location>
        <position position="624"/>
    </location>
</feature>
<feature type="sequence variant" id="VAR_041966" description="In dbSNP:rs34775357." evidence="9">
    <original>T</original>
    <variation>R</variation>
    <location>
        <position position="670"/>
    </location>
</feature>
<feature type="sequence variant" id="VAR_022386" description="In dbSNP:rs1057000." evidence="6 8">
    <original>R</original>
    <variation>L</variation>
    <location>
        <position position="700"/>
    </location>
</feature>
<feature type="sequence variant" id="VAR_078598" description="In CHDFIDD; dbSNP:rs1057519633." evidence="14">
    <original>G</original>
    <variation>R</variation>
    <location>
        <position position="714"/>
    </location>
</feature>
<feature type="sequence variant" id="VAR_078599" description="In CHDFIDD; dbSNP:rs1057519632." evidence="14">
    <original>G</original>
    <variation>R</variation>
    <location>
        <position position="717"/>
    </location>
</feature>
<feature type="sequence variant" id="VAR_079422" description="In CHDFIDD; dbSNP:rs1064795731." evidence="15">
    <original>K</original>
    <variation>E</variation>
    <location>
        <position position="734"/>
    </location>
</feature>
<feature type="sequence variant" id="VAR_078600" description="In CHDFIDD; dbSNP:rs1057519634." evidence="14">
    <original>R</original>
    <variation>Q</variation>
    <location>
        <position position="751"/>
    </location>
</feature>
<feature type="sequence variant" id="VAR_079423" description="In CHDFIDD; dbSNP:rs1554333853." evidence="15">
    <original>N</original>
    <variation>D</variation>
    <location>
        <position position="842"/>
    </location>
</feature>
<feature type="sequence variant" id="VAR_078601" description="In CHDFIDD; dbSNP:rs878853160." evidence="14 15">
    <original>N</original>
    <variation>S</variation>
    <location>
        <position position="842"/>
    </location>
</feature>
<feature type="sequence variant" id="VAR_022387" description="In dbSNP:rs17496712." evidence="17">
    <original>V</original>
    <variation>M</variation>
    <location>
        <position position="1062"/>
    </location>
</feature>
<feature type="sequence variant" id="VAR_041967" description="In dbSNP:rs3204309." evidence="6 9">
    <original>V</original>
    <variation>M</variation>
    <location>
        <position position="1170"/>
    </location>
</feature>
<feature type="sequence conflict" description="In Ref. 1; CAC10400/CAC10401." evidence="20" ref="1">
    <original>K</original>
    <variation>R</variation>
    <location>
        <position position="21"/>
    </location>
</feature>
<feature type="sequence conflict" description="In Ref. 1; CAC10400/CAC10401 and 4; AAA58424." evidence="20" ref="1 4">
    <original>A</original>
    <variation>T</variation>
    <location>
        <position position="671"/>
    </location>
</feature>
<feature type="sequence conflict" description="In Ref. 4; AAA58424." evidence="20" ref="4">
    <original>N</original>
    <variation>Y</variation>
    <location>
        <position position="810"/>
    </location>
</feature>
<feature type="sequence conflict" description="In Ref. 5; BAB47420." evidence="20" ref="5">
    <original>YSSEE</original>
    <variation>FSVFF</variation>
    <location>
        <begin position="862"/>
        <end position="866"/>
    </location>
</feature>
<feature type="sequence conflict" description="In Ref. 5; BAD96773." evidence="20" ref="5">
    <original>Q</original>
    <variation>R</variation>
    <location>
        <position position="1180"/>
    </location>
</feature>
<feature type="sequence conflict" description="In Ref. 5; BAD96773." evidence="20" ref="5">
    <original>G</original>
    <variation>E</variation>
    <location>
        <position position="1356"/>
    </location>
</feature>
<feature type="helix" evidence="30">
    <location>
        <begin position="702"/>
        <end position="704"/>
    </location>
</feature>
<feature type="strand" evidence="30">
    <location>
        <begin position="705"/>
        <end position="713"/>
    </location>
</feature>
<feature type="strand" evidence="30">
    <location>
        <begin position="715"/>
        <end position="724"/>
    </location>
</feature>
<feature type="turn" evidence="30">
    <location>
        <begin position="725"/>
        <end position="727"/>
    </location>
</feature>
<feature type="strand" evidence="30">
    <location>
        <begin position="730"/>
        <end position="736"/>
    </location>
</feature>
<feature type="strand" evidence="30">
    <location>
        <begin position="739"/>
        <end position="741"/>
    </location>
</feature>
<feature type="helix" evidence="30">
    <location>
        <begin position="747"/>
        <end position="758"/>
    </location>
</feature>
<feature type="strand" evidence="30">
    <location>
        <begin position="767"/>
        <end position="772"/>
    </location>
</feature>
<feature type="strand" evidence="30">
    <location>
        <begin position="787"/>
        <end position="792"/>
    </location>
</feature>
<feature type="strand" evidence="30">
    <location>
        <begin position="795"/>
        <end position="797"/>
    </location>
</feature>
<feature type="helix" evidence="30">
    <location>
        <begin position="798"/>
        <end position="804"/>
    </location>
</feature>
<feature type="helix" evidence="30">
    <location>
        <begin position="811"/>
        <end position="830"/>
    </location>
</feature>
<feature type="helix" evidence="30">
    <location>
        <begin position="840"/>
        <end position="842"/>
    </location>
</feature>
<feature type="strand" evidence="30">
    <location>
        <begin position="843"/>
        <end position="845"/>
    </location>
</feature>
<feature type="strand" evidence="30">
    <location>
        <begin position="851"/>
        <end position="853"/>
    </location>
</feature>
<feature type="helix" evidence="30">
    <location>
        <begin position="856"/>
        <end position="858"/>
    </location>
</feature>
<feature type="strand" evidence="30">
    <location>
        <begin position="864"/>
        <end position="866"/>
    </location>
</feature>
<feature type="helix" evidence="30">
    <location>
        <begin position="877"/>
        <end position="879"/>
    </location>
</feature>
<feature type="helix" evidence="30">
    <location>
        <begin position="882"/>
        <end position="885"/>
    </location>
</feature>
<feature type="helix" evidence="30">
    <location>
        <begin position="894"/>
        <end position="908"/>
    </location>
</feature>
<feature type="strand" evidence="30">
    <location>
        <begin position="909"/>
        <end position="911"/>
    </location>
</feature>
<feature type="helix" evidence="30">
    <location>
        <begin position="919"/>
        <end position="930"/>
    </location>
</feature>
<feature type="turn" evidence="30">
    <location>
        <begin position="935"/>
        <end position="937"/>
    </location>
</feature>
<feature type="helix" evidence="30">
    <location>
        <begin position="939"/>
        <end position="943"/>
    </location>
</feature>
<feature type="turn" evidence="30">
    <location>
        <begin position="945"/>
        <end position="950"/>
    </location>
</feature>
<feature type="helix" evidence="30">
    <location>
        <begin position="960"/>
        <end position="963"/>
    </location>
</feature>
<feature type="turn" evidence="30">
    <location>
        <begin position="964"/>
        <end position="966"/>
    </location>
</feature>
<feature type="helix" evidence="30">
    <location>
        <begin position="969"/>
        <end position="978"/>
    </location>
</feature>
<feature type="turn" evidence="30">
    <location>
        <begin position="983"/>
        <end position="985"/>
    </location>
</feature>
<feature type="helix" evidence="30">
    <location>
        <begin position="989"/>
        <end position="994"/>
    </location>
</feature>
<feature type="turn" evidence="30">
    <location>
        <begin position="996"/>
        <end position="1000"/>
    </location>
</feature>
<feature type="helix" evidence="30">
    <location>
        <begin position="1003"/>
        <end position="1005"/>
    </location>
</feature>
<feature type="helix" evidence="30">
    <location>
        <begin position="1019"/>
        <end position="1024"/>
    </location>
</feature>
<feature type="helix" evidence="30">
    <location>
        <begin position="1026"/>
        <end position="1030"/>
    </location>
</feature>
<protein>
    <recommendedName>
        <fullName>Cyclin-dependent kinase 13</fullName>
        <ecNumber>2.7.11.22</ecNumber>
        <ecNumber>2.7.11.23</ecNumber>
    </recommendedName>
    <alternativeName>
        <fullName>CDC2-related protein kinase 5</fullName>
    </alternativeName>
    <alternativeName>
        <fullName>Cell division cycle 2-like protein kinase 5</fullName>
    </alternativeName>
    <alternativeName>
        <fullName>Cell division protein kinase 13</fullName>
        <shortName>hCDK13</shortName>
    </alternativeName>
    <alternativeName>
        <fullName>Cholinesterase-related cell division controller</fullName>
    </alternativeName>
</protein>